<feature type="chain" id="PRO_0000391010" description="Polyisoprenyl-teichoic acid--peptidoglycan teichoic acid transferase TagV">
    <location>
        <begin position="1"/>
        <end position="391"/>
    </location>
</feature>
<feature type="topological domain" description="Cytoplasmic" evidence="5">
    <location>
        <begin position="1"/>
        <end position="23"/>
    </location>
</feature>
<feature type="transmembrane region" description="Helical; Signal-anchor for type II membrane protein" evidence="1">
    <location>
        <begin position="24"/>
        <end position="44"/>
    </location>
</feature>
<feature type="topological domain" description="Extracellular" evidence="5">
    <location>
        <begin position="45"/>
        <end position="391"/>
    </location>
</feature>
<feature type="region of interest" description="Disordered" evidence="2">
    <location>
        <begin position="329"/>
        <end position="391"/>
    </location>
</feature>
<feature type="compositionally biased region" description="Low complexity" evidence="2">
    <location>
        <begin position="333"/>
        <end position="391"/>
    </location>
</feature>
<feature type="strand" evidence="7">
    <location>
        <begin position="77"/>
        <end position="85"/>
    </location>
</feature>
<feature type="strand" evidence="7">
    <location>
        <begin position="87"/>
        <end position="89"/>
    </location>
</feature>
<feature type="strand" evidence="7">
    <location>
        <begin position="96"/>
        <end position="105"/>
    </location>
</feature>
<feature type="helix" evidence="7">
    <location>
        <begin position="106"/>
        <end position="108"/>
    </location>
</feature>
<feature type="strand" evidence="7">
    <location>
        <begin position="110"/>
        <end position="115"/>
    </location>
</feature>
<feature type="strand" evidence="7">
    <location>
        <begin position="120"/>
        <end position="122"/>
    </location>
</feature>
<feature type="strand" evidence="7">
    <location>
        <begin position="128"/>
        <end position="130"/>
    </location>
</feature>
<feature type="helix" evidence="7">
    <location>
        <begin position="135"/>
        <end position="137"/>
    </location>
</feature>
<feature type="helix" evidence="7">
    <location>
        <begin position="139"/>
        <end position="141"/>
    </location>
</feature>
<feature type="helix" evidence="7">
    <location>
        <begin position="143"/>
        <end position="155"/>
    </location>
</feature>
<feature type="strand" evidence="7">
    <location>
        <begin position="161"/>
        <end position="165"/>
    </location>
</feature>
<feature type="helix" evidence="7">
    <location>
        <begin position="167"/>
        <end position="176"/>
    </location>
</feature>
<feature type="strand" evidence="7">
    <location>
        <begin position="180"/>
        <end position="184"/>
    </location>
</feature>
<feature type="strand" evidence="7">
    <location>
        <begin position="188"/>
        <end position="190"/>
    </location>
</feature>
<feature type="strand" evidence="7">
    <location>
        <begin position="200"/>
        <end position="202"/>
    </location>
</feature>
<feature type="strand" evidence="7">
    <location>
        <begin position="204"/>
        <end position="209"/>
    </location>
</feature>
<feature type="helix" evidence="7">
    <location>
        <begin position="211"/>
        <end position="219"/>
    </location>
</feature>
<feature type="helix" evidence="7">
    <location>
        <begin position="229"/>
        <end position="248"/>
    </location>
</feature>
<feature type="helix" evidence="7">
    <location>
        <begin position="252"/>
        <end position="262"/>
    </location>
</feature>
<feature type="turn" evidence="7">
    <location>
        <begin position="263"/>
        <end position="265"/>
    </location>
</feature>
<feature type="strand" evidence="7">
    <location>
        <begin position="266"/>
        <end position="269"/>
    </location>
</feature>
<feature type="helix" evidence="7">
    <location>
        <begin position="272"/>
        <end position="281"/>
    </location>
</feature>
<feature type="turn" evidence="7">
    <location>
        <begin position="282"/>
        <end position="284"/>
    </location>
</feature>
<feature type="helix" evidence="7">
    <location>
        <begin position="287"/>
        <end position="289"/>
    </location>
</feature>
<feature type="strand" evidence="7">
    <location>
        <begin position="290"/>
        <end position="293"/>
    </location>
</feature>
<feature type="strand" evidence="7">
    <location>
        <begin position="297"/>
        <end position="302"/>
    </location>
</feature>
<feature type="turn" evidence="7">
    <location>
        <begin position="303"/>
        <end position="306"/>
    </location>
</feature>
<feature type="strand" evidence="7">
    <location>
        <begin position="307"/>
        <end position="312"/>
    </location>
</feature>
<feature type="helix" evidence="7">
    <location>
        <begin position="314"/>
        <end position="328"/>
    </location>
</feature>
<proteinExistence type="evidence at protein level"/>
<evidence type="ECO:0000255" key="1"/>
<evidence type="ECO:0000256" key="2">
    <source>
        <dbReference type="SAM" id="MobiDB-lite"/>
    </source>
</evidence>
<evidence type="ECO:0000269" key="3">
    <source>
    </source>
</evidence>
<evidence type="ECO:0000303" key="4">
    <source>
    </source>
</evidence>
<evidence type="ECO:0000305" key="5"/>
<evidence type="ECO:0007744" key="6">
    <source>
        <dbReference type="PDB" id="3NXH"/>
    </source>
</evidence>
<evidence type="ECO:0007829" key="7">
    <source>
        <dbReference type="PDB" id="6UF3"/>
    </source>
</evidence>
<dbReference type="EC" id="2.7.8.-" evidence="3"/>
<dbReference type="EMBL" id="U56901">
    <property type="protein sequence ID" value="AAC44935.1"/>
    <property type="molecule type" value="Genomic_DNA"/>
</dbReference>
<dbReference type="EMBL" id="AL009126">
    <property type="protein sequence ID" value="CAB15569.1"/>
    <property type="molecule type" value="Genomic_DNA"/>
</dbReference>
<dbReference type="PIR" id="H70041">
    <property type="entry name" value="H70041"/>
</dbReference>
<dbReference type="RefSeq" id="NP_391432.1">
    <property type="nucleotide sequence ID" value="NC_000964.3"/>
</dbReference>
<dbReference type="RefSeq" id="WP_003244117.1">
    <property type="nucleotide sequence ID" value="NZ_OZ025638.1"/>
</dbReference>
<dbReference type="PDB" id="3NXH">
    <property type="method" value="X-ray"/>
    <property type="resolution" value="2.58 A"/>
    <property type="chains" value="A=72-332"/>
</dbReference>
<dbReference type="PDB" id="6UF3">
    <property type="method" value="X-ray"/>
    <property type="resolution" value="1.60 A"/>
    <property type="chains" value="A=72-332"/>
</dbReference>
<dbReference type="PDBsum" id="3NXH"/>
<dbReference type="PDBsum" id="6UF3"/>
<dbReference type="SMR" id="P96499"/>
<dbReference type="FunCoup" id="P96499">
    <property type="interactions" value="129"/>
</dbReference>
<dbReference type="STRING" id="224308.BSU35520"/>
<dbReference type="PaxDb" id="224308-BSU35520"/>
<dbReference type="DNASU" id="936761"/>
<dbReference type="EnsemblBacteria" id="CAB15569">
    <property type="protein sequence ID" value="CAB15569"/>
    <property type="gene ID" value="BSU_35520"/>
</dbReference>
<dbReference type="GeneID" id="936761"/>
<dbReference type="KEGG" id="bsu:BSU35520"/>
<dbReference type="PATRIC" id="fig|224308.179.peg.3843"/>
<dbReference type="eggNOG" id="COG1316">
    <property type="taxonomic scope" value="Bacteria"/>
</dbReference>
<dbReference type="InParanoid" id="P96499"/>
<dbReference type="OrthoDB" id="27330at2"/>
<dbReference type="PhylomeDB" id="P96499"/>
<dbReference type="BioCyc" id="BSUB:BSU35520-MONOMER"/>
<dbReference type="BioCyc" id="MetaCyc:BSU35520-MONOMER"/>
<dbReference type="EvolutionaryTrace" id="P96499"/>
<dbReference type="Proteomes" id="UP000001570">
    <property type="component" value="Chromosome"/>
</dbReference>
<dbReference type="GO" id="GO:0005886">
    <property type="term" value="C:plasma membrane"/>
    <property type="evidence" value="ECO:0007669"/>
    <property type="project" value="UniProtKB-SubCell"/>
</dbReference>
<dbReference type="GO" id="GO:0016740">
    <property type="term" value="F:transferase activity"/>
    <property type="evidence" value="ECO:0007669"/>
    <property type="project" value="UniProtKB-KW"/>
</dbReference>
<dbReference type="GO" id="GO:0071555">
    <property type="term" value="P:cell wall organization"/>
    <property type="evidence" value="ECO:0007669"/>
    <property type="project" value="UniProtKB-KW"/>
</dbReference>
<dbReference type="Gene3D" id="3.40.630.190">
    <property type="entry name" value="LCP protein"/>
    <property type="match status" value="1"/>
</dbReference>
<dbReference type="InterPro" id="IPR050922">
    <property type="entry name" value="LytR/CpsA/Psr_CW_biosynth"/>
</dbReference>
<dbReference type="InterPro" id="IPR004474">
    <property type="entry name" value="LytR_CpsA_psr"/>
</dbReference>
<dbReference type="NCBIfam" id="TIGR00350">
    <property type="entry name" value="lytR_cpsA_psr"/>
    <property type="match status" value="1"/>
</dbReference>
<dbReference type="PANTHER" id="PTHR33392">
    <property type="entry name" value="POLYISOPRENYL-TEICHOIC ACID--PEPTIDOGLYCAN TEICHOIC ACID TRANSFERASE TAGU"/>
    <property type="match status" value="1"/>
</dbReference>
<dbReference type="PANTHER" id="PTHR33392:SF10">
    <property type="entry name" value="POLYISOPRENYL-TEICHOIC ACID--PEPTIDOGLYCAN TEICHOIC ACID TRANSFERASE TAGV"/>
    <property type="match status" value="1"/>
</dbReference>
<dbReference type="Pfam" id="PF03816">
    <property type="entry name" value="LytR_cpsA_psr"/>
    <property type="match status" value="1"/>
</dbReference>
<accession>P96499</accession>
<accession>Q795D1</accession>
<gene>
    <name evidence="4" type="primary">tagV</name>
    <name type="synonym">yvhJ</name>
    <name type="ordered locus">BSU35520</name>
</gene>
<comment type="function">
    <text evidence="3">May catalyze the final step in cell wall teichoic acid biosynthesis, the transfer of the anionic cell wall polymers (APs) from their lipid-linked precursor to the cell wall peptidoglycan (PG).</text>
</comment>
<comment type="pathway">
    <text evidence="3">Cell wall biogenesis.</text>
</comment>
<comment type="subcellular location">
    <subcellularLocation>
        <location evidence="5">Cell membrane</location>
        <topology evidence="1 5">Single-pass type II membrane protein</topology>
    </subcellularLocation>
</comment>
<comment type="disruption phenotype">
    <text evidence="3">Single mutant has no effect on cell growth or morphology under normal growth conditions. Triple disruption of tagTUV genes is not viable.</text>
</comment>
<comment type="similarity">
    <text evidence="5">Belongs to the LytR/CpsA/Psr (LCP) family.</text>
</comment>
<sequence>MAERVRVRVRKKKKSKRRKILKRIMLLFALALLVVVGLGGYKLYKTINAADESYDALSRGNKSNLRNEVVDMKKKPFSILFMGIEDYATKGQKGRSDSLIVVTLDPKNKTMKMLSIPRDTRVQLAGDTTGSKTKINAAYSKGGKDETVETVENFLQIPIDKYVTVDFDGFKDVINEVGGIDVDVPFDFDEKSDVDESKRIYFKKGEMHLNGEEALAYARMRKQDKRGDFGRNDRQKQILNALIDRMSSASNIAKIDKIAEKASENVETNIRITEGLALQQIYSGFTSKKIDTLSITGSDLYLGPNNTYYFEPDATNLEKVRKTLQEHLDYTPDTSTGTSGTEDGTDSSSSSGSTGSTGTTTDGTTNGSSYSNDSSTSSNNSTTNSTTDSSY</sequence>
<name>TAGV_BACSU</name>
<organism>
    <name type="scientific">Bacillus subtilis (strain 168)</name>
    <dbReference type="NCBI Taxonomy" id="224308"/>
    <lineage>
        <taxon>Bacteria</taxon>
        <taxon>Bacillati</taxon>
        <taxon>Bacillota</taxon>
        <taxon>Bacilli</taxon>
        <taxon>Bacillales</taxon>
        <taxon>Bacillaceae</taxon>
        <taxon>Bacillus</taxon>
    </lineage>
</organism>
<protein>
    <recommendedName>
        <fullName evidence="5">Polyisoprenyl-teichoic acid--peptidoglycan teichoic acid transferase TagV</fullName>
        <ecNumber evidence="3">2.7.8.-</ecNumber>
    </recommendedName>
</protein>
<reference key="1">
    <citation type="submission" date="1997-01" db="EMBL/GenBank/DDBJ databases">
        <title>Sequence of the Bacillus subtilis 168 chromosomal region from 305 to 307 degree.</title>
        <authorList>
            <person name="Soldo B."/>
            <person name="Lazarevic V."/>
            <person name="Mauel C."/>
            <person name="Karamata D."/>
        </authorList>
    </citation>
    <scope>NUCLEOTIDE SEQUENCE [GENOMIC DNA]</scope>
    <source>
        <strain>168</strain>
    </source>
</reference>
<reference key="2">
    <citation type="journal article" date="1997" name="Nature">
        <title>The complete genome sequence of the Gram-positive bacterium Bacillus subtilis.</title>
        <authorList>
            <person name="Kunst F."/>
            <person name="Ogasawara N."/>
            <person name="Moszer I."/>
            <person name="Albertini A.M."/>
            <person name="Alloni G."/>
            <person name="Azevedo V."/>
            <person name="Bertero M.G."/>
            <person name="Bessieres P."/>
            <person name="Bolotin A."/>
            <person name="Borchert S."/>
            <person name="Borriss R."/>
            <person name="Boursier L."/>
            <person name="Brans A."/>
            <person name="Braun M."/>
            <person name="Brignell S.C."/>
            <person name="Bron S."/>
            <person name="Brouillet S."/>
            <person name="Bruschi C.V."/>
            <person name="Caldwell B."/>
            <person name="Capuano V."/>
            <person name="Carter N.M."/>
            <person name="Choi S.-K."/>
            <person name="Codani J.-J."/>
            <person name="Connerton I.F."/>
            <person name="Cummings N.J."/>
            <person name="Daniel R.A."/>
            <person name="Denizot F."/>
            <person name="Devine K.M."/>
            <person name="Duesterhoeft A."/>
            <person name="Ehrlich S.D."/>
            <person name="Emmerson P.T."/>
            <person name="Entian K.-D."/>
            <person name="Errington J."/>
            <person name="Fabret C."/>
            <person name="Ferrari E."/>
            <person name="Foulger D."/>
            <person name="Fritz C."/>
            <person name="Fujita M."/>
            <person name="Fujita Y."/>
            <person name="Fuma S."/>
            <person name="Galizzi A."/>
            <person name="Galleron N."/>
            <person name="Ghim S.-Y."/>
            <person name="Glaser P."/>
            <person name="Goffeau A."/>
            <person name="Golightly E.J."/>
            <person name="Grandi G."/>
            <person name="Guiseppi G."/>
            <person name="Guy B.J."/>
            <person name="Haga K."/>
            <person name="Haiech J."/>
            <person name="Harwood C.R."/>
            <person name="Henaut A."/>
            <person name="Hilbert H."/>
            <person name="Holsappel S."/>
            <person name="Hosono S."/>
            <person name="Hullo M.-F."/>
            <person name="Itaya M."/>
            <person name="Jones L.-M."/>
            <person name="Joris B."/>
            <person name="Karamata D."/>
            <person name="Kasahara Y."/>
            <person name="Klaerr-Blanchard M."/>
            <person name="Klein C."/>
            <person name="Kobayashi Y."/>
            <person name="Koetter P."/>
            <person name="Koningstein G."/>
            <person name="Krogh S."/>
            <person name="Kumano M."/>
            <person name="Kurita K."/>
            <person name="Lapidus A."/>
            <person name="Lardinois S."/>
            <person name="Lauber J."/>
            <person name="Lazarevic V."/>
            <person name="Lee S.-M."/>
            <person name="Levine A."/>
            <person name="Liu H."/>
            <person name="Masuda S."/>
            <person name="Mauel C."/>
            <person name="Medigue C."/>
            <person name="Medina N."/>
            <person name="Mellado R.P."/>
            <person name="Mizuno M."/>
            <person name="Moestl D."/>
            <person name="Nakai S."/>
            <person name="Noback M."/>
            <person name="Noone D."/>
            <person name="O'Reilly M."/>
            <person name="Ogawa K."/>
            <person name="Ogiwara A."/>
            <person name="Oudega B."/>
            <person name="Park S.-H."/>
            <person name="Parro V."/>
            <person name="Pohl T.M."/>
            <person name="Portetelle D."/>
            <person name="Porwollik S."/>
            <person name="Prescott A.M."/>
            <person name="Presecan E."/>
            <person name="Pujic P."/>
            <person name="Purnelle B."/>
            <person name="Rapoport G."/>
            <person name="Rey M."/>
            <person name="Reynolds S."/>
            <person name="Rieger M."/>
            <person name="Rivolta C."/>
            <person name="Rocha E."/>
            <person name="Roche B."/>
            <person name="Rose M."/>
            <person name="Sadaie Y."/>
            <person name="Sato T."/>
            <person name="Scanlan E."/>
            <person name="Schleich S."/>
            <person name="Schroeter R."/>
            <person name="Scoffone F."/>
            <person name="Sekiguchi J."/>
            <person name="Sekowska A."/>
            <person name="Seror S.J."/>
            <person name="Serror P."/>
            <person name="Shin B.-S."/>
            <person name="Soldo B."/>
            <person name="Sorokin A."/>
            <person name="Tacconi E."/>
            <person name="Takagi T."/>
            <person name="Takahashi H."/>
            <person name="Takemaru K."/>
            <person name="Takeuchi M."/>
            <person name="Tamakoshi A."/>
            <person name="Tanaka T."/>
            <person name="Terpstra P."/>
            <person name="Tognoni A."/>
            <person name="Tosato V."/>
            <person name="Uchiyama S."/>
            <person name="Vandenbol M."/>
            <person name="Vannier F."/>
            <person name="Vassarotti A."/>
            <person name="Viari A."/>
            <person name="Wambutt R."/>
            <person name="Wedler E."/>
            <person name="Wedler H."/>
            <person name="Weitzenegger T."/>
            <person name="Winters P."/>
            <person name="Wipat A."/>
            <person name="Yamamoto H."/>
            <person name="Yamane K."/>
            <person name="Yasumoto K."/>
            <person name="Yata K."/>
            <person name="Yoshida K."/>
            <person name="Yoshikawa H.-F."/>
            <person name="Zumstein E."/>
            <person name="Yoshikawa H."/>
            <person name="Danchin A."/>
        </authorList>
    </citation>
    <scope>NUCLEOTIDE SEQUENCE [LARGE SCALE GENOMIC DNA]</scope>
    <source>
        <strain>168</strain>
    </source>
</reference>
<reference key="3">
    <citation type="journal article" date="2011" name="EMBO J.">
        <title>A widespread family of bacterial cell wall assembly proteins.</title>
        <authorList>
            <person name="Kawai Y."/>
            <person name="Marles-Wright J."/>
            <person name="Cleverley R.M."/>
            <person name="Emmins R."/>
            <person name="Ishikawa S."/>
            <person name="Kuwano M."/>
            <person name="Heinz N."/>
            <person name="Bui N.K."/>
            <person name="Hoyland C.N."/>
            <person name="Ogasawara N."/>
            <person name="Lewis R.J."/>
            <person name="Vollmer W."/>
            <person name="Daniel R.A."/>
            <person name="Errington J."/>
        </authorList>
    </citation>
    <scope>FUNCTION</scope>
    <scope>PATHWAY</scope>
    <scope>DISRUPTION PHENOTYPE</scope>
</reference>
<reference evidence="6" key="4">
    <citation type="submission" date="2010-07" db="PDB data bank">
        <title>Crystal structure of the transcriptional regulator YvhJ from Bacillus subtilis.</title>
        <authorList>
            <person name="Vorobiev S."/>
            <person name="Chen Y."/>
            <person name="Seetharaman J."/>
            <person name="Sahdev S."/>
            <person name="Xiao R."/>
            <person name="Ciccosanti C."/>
            <person name="Lee D."/>
            <person name="Everett J.K."/>
            <person name="Nair R."/>
            <person name="Acton T.B."/>
            <person name="Rost B."/>
            <person name="Montelione G.T."/>
            <person name="Hunt J.F."/>
            <person name="Tong L."/>
        </authorList>
    </citation>
    <scope>X-RAY CRYSTALLOGRAPHY (2.58 ANGSTROMS) OF 72-332</scope>
</reference>
<keyword id="KW-0002">3D-structure</keyword>
<keyword id="KW-1003">Cell membrane</keyword>
<keyword id="KW-0961">Cell wall biogenesis/degradation</keyword>
<keyword id="KW-0472">Membrane</keyword>
<keyword id="KW-1185">Reference proteome</keyword>
<keyword id="KW-0735">Signal-anchor</keyword>
<keyword id="KW-0808">Transferase</keyword>
<keyword id="KW-0812">Transmembrane</keyword>
<keyword id="KW-1133">Transmembrane helix</keyword>